<feature type="chain" id="PRO_0000271500" description="Xylose import ATP-binding protein XylG">
    <location>
        <begin position="1"/>
        <end position="513"/>
    </location>
</feature>
<feature type="domain" description="ABC transporter 1" evidence="1">
    <location>
        <begin position="5"/>
        <end position="242"/>
    </location>
</feature>
<feature type="domain" description="ABC transporter 2" evidence="1">
    <location>
        <begin position="259"/>
        <end position="505"/>
    </location>
</feature>
<feature type="binding site" evidence="1">
    <location>
        <begin position="37"/>
        <end position="44"/>
    </location>
    <ligand>
        <name>ATP</name>
        <dbReference type="ChEBI" id="CHEBI:30616"/>
    </ligand>
</feature>
<protein>
    <recommendedName>
        <fullName evidence="1">Xylose import ATP-binding protein XylG</fullName>
        <ecNumber evidence="1">7.5.2.10</ecNumber>
    </recommendedName>
</protein>
<name>XYLG_PECAS</name>
<keyword id="KW-0067">ATP-binding</keyword>
<keyword id="KW-0997">Cell inner membrane</keyword>
<keyword id="KW-1003">Cell membrane</keyword>
<keyword id="KW-0472">Membrane</keyword>
<keyword id="KW-0547">Nucleotide-binding</keyword>
<keyword id="KW-1185">Reference proteome</keyword>
<keyword id="KW-0677">Repeat</keyword>
<keyword id="KW-0762">Sugar transport</keyword>
<keyword id="KW-1278">Translocase</keyword>
<keyword id="KW-0813">Transport</keyword>
<gene>
    <name evidence="1" type="primary">xylG</name>
    <name type="ordered locus">ECA0099</name>
</gene>
<proteinExistence type="inferred from homology"/>
<sequence>MPHLLEMKNITKAFGAVKAVDNVSLTLEAGQVLSLCGENGSGKSTLMKVLCAIYPHGSYDGQIIFSGDELRANHIRDTEQKGIAIIHQELALVKEMTVLENMFLGNEWTRFGVMDYDNMYLRCQRMLEQVKLAVDPNTKVGELGLGQQQLVEIAKALNKQVRLLVLDEPTASLTERETGILLEIIQDLRDHGIACIYISHKLNEVKAISDVICVIRDGKHIGTRPAAELSEDHIIAMMVGRELTELYPNEPHVIGEEVLRVEHLTAWHPVNRHIRRVDDVSFALHRGEILGIAGLVGSGRTETVQCLFGAYRGRWQGDIFIDGKPVTISNCQQAMAQGIAMVPEDRKKDGIVPVMGVAQNMTLAALDQFTGPLSMLDDAREQDIIRQSLANLKVKTSSPELAIARLSGGNQQKAVLAKCLLLNPRILILDEPTRGIDIGAKYEIYKLINALVKQHIAVIVISSELPEVLGLSDRVLVMHQGRIKADLINRDLTQEQVMEAALRSEHRAENIAV</sequence>
<comment type="function">
    <text evidence="1">Part of the ABC transporter complex XylFGH involved in xylose import. Responsible for energy coupling to the transport system.</text>
</comment>
<comment type="catalytic activity">
    <reaction evidence="1">
        <text>D-xylose(out) + ATP + H2O = D-xylose(in) + ADP + phosphate + H(+)</text>
        <dbReference type="Rhea" id="RHEA:29899"/>
        <dbReference type="ChEBI" id="CHEBI:15377"/>
        <dbReference type="ChEBI" id="CHEBI:15378"/>
        <dbReference type="ChEBI" id="CHEBI:30616"/>
        <dbReference type="ChEBI" id="CHEBI:43474"/>
        <dbReference type="ChEBI" id="CHEBI:53455"/>
        <dbReference type="ChEBI" id="CHEBI:456216"/>
        <dbReference type="EC" id="7.5.2.10"/>
    </reaction>
</comment>
<comment type="subunit">
    <text evidence="1">The complex is composed of two ATP-binding proteins (XylG), two transmembrane proteins (XylH) and a solute-binding protein (XylF).</text>
</comment>
<comment type="subcellular location">
    <subcellularLocation>
        <location evidence="1">Cell inner membrane</location>
        <topology evidence="1">Peripheral membrane protein</topology>
    </subcellularLocation>
</comment>
<comment type="similarity">
    <text evidence="1">Belongs to the ABC transporter superfamily. Xylose importer (TC 3.A.1.2.4) family.</text>
</comment>
<reference key="1">
    <citation type="journal article" date="2004" name="Proc. Natl. Acad. Sci. U.S.A.">
        <title>Genome sequence of the enterobacterial phytopathogen Erwinia carotovora subsp. atroseptica and characterization of virulence factors.</title>
        <authorList>
            <person name="Bell K.S."/>
            <person name="Sebaihia M."/>
            <person name="Pritchard L."/>
            <person name="Holden M.T.G."/>
            <person name="Hyman L.J."/>
            <person name="Holeva M.C."/>
            <person name="Thomson N.R."/>
            <person name="Bentley S.D."/>
            <person name="Churcher L.J.C."/>
            <person name="Mungall K."/>
            <person name="Atkin R."/>
            <person name="Bason N."/>
            <person name="Brooks K."/>
            <person name="Chillingworth T."/>
            <person name="Clark K."/>
            <person name="Doggett J."/>
            <person name="Fraser A."/>
            <person name="Hance Z."/>
            <person name="Hauser H."/>
            <person name="Jagels K."/>
            <person name="Moule S."/>
            <person name="Norbertczak H."/>
            <person name="Ormond D."/>
            <person name="Price C."/>
            <person name="Quail M.A."/>
            <person name="Sanders M."/>
            <person name="Walker D."/>
            <person name="Whitehead S."/>
            <person name="Salmond G.P.C."/>
            <person name="Birch P.R.J."/>
            <person name="Parkhill J."/>
            <person name="Toth I.K."/>
        </authorList>
    </citation>
    <scope>NUCLEOTIDE SEQUENCE [LARGE SCALE GENOMIC DNA]</scope>
    <source>
        <strain>SCRI 1043 / ATCC BAA-672</strain>
    </source>
</reference>
<accession>Q6DB03</accession>
<evidence type="ECO:0000255" key="1">
    <source>
        <dbReference type="HAMAP-Rule" id="MF_01722"/>
    </source>
</evidence>
<dbReference type="EC" id="7.5.2.10" evidence="1"/>
<dbReference type="EMBL" id="BX950851">
    <property type="protein sequence ID" value="CAG73019.1"/>
    <property type="molecule type" value="Genomic_DNA"/>
</dbReference>
<dbReference type="RefSeq" id="WP_011091742.1">
    <property type="nucleotide sequence ID" value="NC_004547.2"/>
</dbReference>
<dbReference type="SMR" id="Q6DB03"/>
<dbReference type="STRING" id="218491.ECA0099"/>
<dbReference type="KEGG" id="eca:ECA0099"/>
<dbReference type="PATRIC" id="fig|218491.5.peg.102"/>
<dbReference type="eggNOG" id="COG1129">
    <property type="taxonomic scope" value="Bacteria"/>
</dbReference>
<dbReference type="HOGENOM" id="CLU_000604_92_3_6"/>
<dbReference type="OrthoDB" id="9776369at2"/>
<dbReference type="Proteomes" id="UP000007966">
    <property type="component" value="Chromosome"/>
</dbReference>
<dbReference type="GO" id="GO:0005886">
    <property type="term" value="C:plasma membrane"/>
    <property type="evidence" value="ECO:0007669"/>
    <property type="project" value="UniProtKB-SubCell"/>
</dbReference>
<dbReference type="GO" id="GO:0015614">
    <property type="term" value="F:ABC-type D-xylose transporter activity"/>
    <property type="evidence" value="ECO:0007669"/>
    <property type="project" value="UniProtKB-EC"/>
</dbReference>
<dbReference type="GO" id="GO:0005524">
    <property type="term" value="F:ATP binding"/>
    <property type="evidence" value="ECO:0007669"/>
    <property type="project" value="UniProtKB-KW"/>
</dbReference>
<dbReference type="GO" id="GO:0016887">
    <property type="term" value="F:ATP hydrolysis activity"/>
    <property type="evidence" value="ECO:0007669"/>
    <property type="project" value="InterPro"/>
</dbReference>
<dbReference type="CDD" id="cd03216">
    <property type="entry name" value="ABC_Carb_Monos_I"/>
    <property type="match status" value="1"/>
</dbReference>
<dbReference type="CDD" id="cd03215">
    <property type="entry name" value="ABC_Carb_Monos_II"/>
    <property type="match status" value="1"/>
</dbReference>
<dbReference type="FunFam" id="3.40.50.300:FF:000126">
    <property type="entry name" value="Galactose/methyl galactoside import ATP-binding protein MglA"/>
    <property type="match status" value="1"/>
</dbReference>
<dbReference type="FunFam" id="3.40.50.300:FF:000127">
    <property type="entry name" value="Ribose import ATP-binding protein RbsA"/>
    <property type="match status" value="1"/>
</dbReference>
<dbReference type="Gene3D" id="3.40.50.300">
    <property type="entry name" value="P-loop containing nucleotide triphosphate hydrolases"/>
    <property type="match status" value="2"/>
</dbReference>
<dbReference type="InterPro" id="IPR003593">
    <property type="entry name" value="AAA+_ATPase"/>
</dbReference>
<dbReference type="InterPro" id="IPR050107">
    <property type="entry name" value="ABC_carbohydrate_import_ATPase"/>
</dbReference>
<dbReference type="InterPro" id="IPR003439">
    <property type="entry name" value="ABC_transporter-like_ATP-bd"/>
</dbReference>
<dbReference type="InterPro" id="IPR017871">
    <property type="entry name" value="ABC_transporter-like_CS"/>
</dbReference>
<dbReference type="InterPro" id="IPR013455">
    <property type="entry name" value="ABC_transptr_XylG"/>
</dbReference>
<dbReference type="InterPro" id="IPR027417">
    <property type="entry name" value="P-loop_NTPase"/>
</dbReference>
<dbReference type="NCBIfam" id="NF010069">
    <property type="entry name" value="PRK13549.1"/>
    <property type="match status" value="1"/>
</dbReference>
<dbReference type="NCBIfam" id="TIGR02633">
    <property type="entry name" value="xylG"/>
    <property type="match status" value="1"/>
</dbReference>
<dbReference type="PANTHER" id="PTHR43790">
    <property type="entry name" value="CARBOHYDRATE TRANSPORT ATP-BINDING PROTEIN MG119-RELATED"/>
    <property type="match status" value="1"/>
</dbReference>
<dbReference type="PANTHER" id="PTHR43790:SF1">
    <property type="entry name" value="XYLOSE IMPORT ATP-BINDING PROTEIN XYLG"/>
    <property type="match status" value="1"/>
</dbReference>
<dbReference type="Pfam" id="PF00005">
    <property type="entry name" value="ABC_tran"/>
    <property type="match status" value="2"/>
</dbReference>
<dbReference type="SMART" id="SM00382">
    <property type="entry name" value="AAA"/>
    <property type="match status" value="2"/>
</dbReference>
<dbReference type="SUPFAM" id="SSF52540">
    <property type="entry name" value="P-loop containing nucleoside triphosphate hydrolases"/>
    <property type="match status" value="2"/>
</dbReference>
<dbReference type="PROSITE" id="PS00211">
    <property type="entry name" value="ABC_TRANSPORTER_1"/>
    <property type="match status" value="1"/>
</dbReference>
<dbReference type="PROSITE" id="PS50893">
    <property type="entry name" value="ABC_TRANSPORTER_2"/>
    <property type="match status" value="2"/>
</dbReference>
<dbReference type="PROSITE" id="PS51280">
    <property type="entry name" value="XYLG"/>
    <property type="match status" value="1"/>
</dbReference>
<organism>
    <name type="scientific">Pectobacterium atrosepticum (strain SCRI 1043 / ATCC BAA-672)</name>
    <name type="common">Erwinia carotovora subsp. atroseptica</name>
    <dbReference type="NCBI Taxonomy" id="218491"/>
    <lineage>
        <taxon>Bacteria</taxon>
        <taxon>Pseudomonadati</taxon>
        <taxon>Pseudomonadota</taxon>
        <taxon>Gammaproteobacteria</taxon>
        <taxon>Enterobacterales</taxon>
        <taxon>Pectobacteriaceae</taxon>
        <taxon>Pectobacterium</taxon>
    </lineage>
</organism>